<feature type="chain" id="PRO_0000405028" description="HTH-type transcriptional repressor KstR">
    <location>
        <begin position="1"/>
        <end position="220"/>
    </location>
</feature>
<feature type="domain" description="HTH tetR-type" evidence="1">
    <location>
        <begin position="36"/>
        <end position="96"/>
    </location>
</feature>
<feature type="DNA-binding region" description="H-T-H motif" evidence="1">
    <location>
        <begin position="59"/>
        <end position="78"/>
    </location>
</feature>
<feature type="helix" evidence="3">
    <location>
        <begin position="34"/>
        <end position="57"/>
    </location>
</feature>
<feature type="helix" evidence="3">
    <location>
        <begin position="60"/>
        <end position="67"/>
    </location>
</feature>
<feature type="helix" evidence="3">
    <location>
        <begin position="71"/>
        <end position="77"/>
    </location>
</feature>
<feature type="helix" evidence="3">
    <location>
        <begin position="81"/>
        <end position="99"/>
    </location>
</feature>
<feature type="helix" evidence="3">
    <location>
        <begin position="102"/>
        <end position="104"/>
    </location>
</feature>
<feature type="strand" evidence="4">
    <location>
        <begin position="107"/>
        <end position="109"/>
    </location>
</feature>
<feature type="helix" evidence="3">
    <location>
        <begin position="110"/>
        <end position="127"/>
    </location>
</feature>
<feature type="helix" evidence="3">
    <location>
        <begin position="129"/>
        <end position="141"/>
    </location>
</feature>
<feature type="helix" evidence="3">
    <location>
        <begin position="144"/>
        <end position="146"/>
    </location>
</feature>
<feature type="helix" evidence="3">
    <location>
        <begin position="147"/>
        <end position="165"/>
    </location>
</feature>
<feature type="strand" evidence="3">
    <location>
        <begin position="167"/>
        <end position="169"/>
    </location>
</feature>
<feature type="helix" evidence="3">
    <location>
        <begin position="172"/>
        <end position="193"/>
    </location>
</feature>
<feature type="helix" evidence="3">
    <location>
        <begin position="199"/>
        <end position="214"/>
    </location>
</feature>
<keyword id="KW-0002">3D-structure</keyword>
<keyword id="KW-0238">DNA-binding</keyword>
<keyword id="KW-1185">Reference proteome</keyword>
<keyword id="KW-0678">Repressor</keyword>
<keyword id="KW-0804">Transcription</keyword>
<keyword id="KW-0805">Transcription regulation</keyword>
<organism>
    <name type="scientific">Mycobacterium tuberculosis (strain ATCC 25618 / H37Rv)</name>
    <dbReference type="NCBI Taxonomy" id="83332"/>
    <lineage>
        <taxon>Bacteria</taxon>
        <taxon>Bacillati</taxon>
        <taxon>Actinomycetota</taxon>
        <taxon>Actinomycetes</taxon>
        <taxon>Mycobacteriales</taxon>
        <taxon>Mycobacteriaceae</taxon>
        <taxon>Mycobacterium</taxon>
        <taxon>Mycobacterium tuberculosis complex</taxon>
    </lineage>
</organism>
<name>KSTR_MYCTU</name>
<sequence>MSSANTNTSSAPDAPPRAVMKVAVLAESELGSEAQRERRKRILDATMAIASKGGYEAVQMRAVADRADVAVGTLYRYFPSKVHLLVSALGREFSRIDAKTDRSAVAGATPFQRLNFMVGKLNRAMQRNPLLTEAMTRAYVFADASAASEVDQVEKLIDSMFARAMANGEPTEDQYHIARVISDVWLSNLLAWLTRRASATDVSKRLDLAVRLLIGDQDSA</sequence>
<comment type="function">
    <text evidence="2">Controls the expression of genes used for utilizing diverse lipids as energy sources.</text>
</comment>
<comment type="subunit">
    <text evidence="2">Homodimer.</text>
</comment>
<comment type="sequence caution">
    <conflict type="erroneous initiation">
        <sequence resource="EMBL-CDS" id="CCP46397"/>
    </conflict>
    <text>Truncated N-terminus.</text>
</comment>
<reference key="1">
    <citation type="journal article" date="1998" name="Nature">
        <title>Deciphering the biology of Mycobacterium tuberculosis from the complete genome sequence.</title>
        <authorList>
            <person name="Cole S.T."/>
            <person name="Brosch R."/>
            <person name="Parkhill J."/>
            <person name="Garnier T."/>
            <person name="Churcher C.M."/>
            <person name="Harris D.E."/>
            <person name="Gordon S.V."/>
            <person name="Eiglmeier K."/>
            <person name="Gas S."/>
            <person name="Barry C.E. III"/>
            <person name="Tekaia F."/>
            <person name="Badcock K."/>
            <person name="Basham D."/>
            <person name="Brown D."/>
            <person name="Chillingworth T."/>
            <person name="Connor R."/>
            <person name="Davies R.M."/>
            <person name="Devlin K."/>
            <person name="Feltwell T."/>
            <person name="Gentles S."/>
            <person name="Hamlin N."/>
            <person name="Holroyd S."/>
            <person name="Hornsby T."/>
            <person name="Jagels K."/>
            <person name="Krogh A."/>
            <person name="McLean J."/>
            <person name="Moule S."/>
            <person name="Murphy L.D."/>
            <person name="Oliver S."/>
            <person name="Osborne J."/>
            <person name="Quail M.A."/>
            <person name="Rajandream M.A."/>
            <person name="Rogers J."/>
            <person name="Rutter S."/>
            <person name="Seeger K."/>
            <person name="Skelton S."/>
            <person name="Squares S."/>
            <person name="Squares R."/>
            <person name="Sulston J.E."/>
            <person name="Taylor K."/>
            <person name="Whitehead S."/>
            <person name="Barrell B.G."/>
        </authorList>
    </citation>
    <scope>NUCLEOTIDE SEQUENCE [LARGE SCALE GENOMIC DNA]</scope>
    <source>
        <strain>ATCC 25618 / H37Rv</strain>
    </source>
</reference>
<reference key="2">
    <citation type="journal article" date="2007" name="Mol. Microbiol.">
        <title>A highly conserved transcriptional repressor controls a large regulon involved in lipid degradation in Mycobacterium smegmatis and Mycobacterium tuberculosis.</title>
        <authorList>
            <person name="Kendall S.L."/>
            <person name="Withers M."/>
            <person name="Soffair C.N."/>
            <person name="Moreland N.J."/>
            <person name="Gurcha S."/>
            <person name="Sidders B."/>
            <person name="Frita R."/>
            <person name="Ten Bokum A."/>
            <person name="Besra G.S."/>
            <person name="Lott J.S."/>
            <person name="Stoker N.G."/>
        </authorList>
    </citation>
    <scope>FUNCTION AS A TRANSCRIPTIONAL REPRESSOR</scope>
    <scope>SUBUNIT</scope>
    <source>
        <strain>ATCC 25618 / H37Rv</strain>
    </source>
</reference>
<reference key="3">
    <citation type="journal article" date="2011" name="Mol. Cell. Proteomics">
        <title>Proteogenomic analysis of Mycobacterium tuberculosis by high resolution mass spectrometry.</title>
        <authorList>
            <person name="Kelkar D.S."/>
            <person name="Kumar D."/>
            <person name="Kumar P."/>
            <person name="Balakrishnan L."/>
            <person name="Muthusamy B."/>
            <person name="Yadav A.K."/>
            <person name="Shrivastava P."/>
            <person name="Marimuthu A."/>
            <person name="Anand S."/>
            <person name="Sundaram H."/>
            <person name="Kingsbury R."/>
            <person name="Harsha H.C."/>
            <person name="Nair B."/>
            <person name="Prasad T.S."/>
            <person name="Chauhan D.S."/>
            <person name="Katoch K."/>
            <person name="Katoch V.M."/>
            <person name="Kumar P."/>
            <person name="Chaerkady R."/>
            <person name="Ramachandran S."/>
            <person name="Dash D."/>
            <person name="Pandey A."/>
        </authorList>
    </citation>
    <scope>IDENTIFICATION BY MASS SPECTROMETRY [LARGE SCALE ANALYSIS]</scope>
    <source>
        <strain>ATCC 25618 / H37Rv</strain>
    </source>
</reference>
<dbReference type="EMBL" id="AL123456">
    <property type="protein sequence ID" value="CCP46397.1"/>
    <property type="status" value="ALT_INIT"/>
    <property type="molecule type" value="Genomic_DNA"/>
</dbReference>
<dbReference type="PIR" id="D70606">
    <property type="entry name" value="D70606"/>
</dbReference>
<dbReference type="RefSeq" id="NP_218091.3">
    <property type="nucleotide sequence ID" value="NC_000962.3"/>
</dbReference>
<dbReference type="PDB" id="3MNL">
    <property type="method" value="X-ray"/>
    <property type="resolution" value="1.80 A"/>
    <property type="chains" value="A/B=22-220"/>
</dbReference>
<dbReference type="PDB" id="5AQC">
    <property type="method" value="X-ray"/>
    <property type="resolution" value="1.66 A"/>
    <property type="chains" value="A/B=23-220"/>
</dbReference>
<dbReference type="PDB" id="5CW8">
    <property type="method" value="X-ray"/>
    <property type="resolution" value="2.60 A"/>
    <property type="chains" value="A/B=22-220"/>
</dbReference>
<dbReference type="PDB" id="5CXG">
    <property type="method" value="X-ray"/>
    <property type="resolution" value="2.10 A"/>
    <property type="chains" value="A/B/C/D=20-220"/>
</dbReference>
<dbReference type="PDB" id="5CXI">
    <property type="method" value="X-ray"/>
    <property type="resolution" value="2.00 A"/>
    <property type="chains" value="A/B=22-220"/>
</dbReference>
<dbReference type="PDB" id="5FMP">
    <property type="method" value="X-ray"/>
    <property type="resolution" value="2.26 A"/>
    <property type="chains" value="A/B=23-220"/>
</dbReference>
<dbReference type="PDB" id="5UA1">
    <property type="method" value="X-ray"/>
    <property type="resolution" value="2.90 A"/>
    <property type="chains" value="A/B=20-220"/>
</dbReference>
<dbReference type="PDB" id="5UA2">
    <property type="method" value="X-ray"/>
    <property type="resolution" value="2.90 A"/>
    <property type="chains" value="A=1-220"/>
</dbReference>
<dbReference type="PDBsum" id="3MNL"/>
<dbReference type="PDBsum" id="5AQC"/>
<dbReference type="PDBsum" id="5CW8"/>
<dbReference type="PDBsum" id="5CXG"/>
<dbReference type="PDBsum" id="5CXI"/>
<dbReference type="PDBsum" id="5FMP"/>
<dbReference type="PDBsum" id="5UA1"/>
<dbReference type="PDBsum" id="5UA2"/>
<dbReference type="SMR" id="P96856"/>
<dbReference type="STRING" id="83332.Rv3574"/>
<dbReference type="PaxDb" id="83332-Rv3574"/>
<dbReference type="DNASU" id="887204"/>
<dbReference type="GeneID" id="887204"/>
<dbReference type="KEGG" id="mtu:Rv3574"/>
<dbReference type="TubercuList" id="Rv3574"/>
<dbReference type="eggNOG" id="COG1309">
    <property type="taxonomic scope" value="Bacteria"/>
</dbReference>
<dbReference type="InParanoid" id="P96856"/>
<dbReference type="OrthoDB" id="9809994at2"/>
<dbReference type="EvolutionaryTrace" id="P96856"/>
<dbReference type="Proteomes" id="UP000001584">
    <property type="component" value="Chromosome"/>
</dbReference>
<dbReference type="GO" id="GO:0003677">
    <property type="term" value="F:DNA binding"/>
    <property type="evidence" value="ECO:0000314"/>
    <property type="project" value="MTBBASE"/>
</dbReference>
<dbReference type="GO" id="GO:0003700">
    <property type="term" value="F:DNA-binding transcription factor activity"/>
    <property type="evidence" value="ECO:0000318"/>
    <property type="project" value="GO_Central"/>
</dbReference>
<dbReference type="GO" id="GO:0042803">
    <property type="term" value="F:protein homodimerization activity"/>
    <property type="evidence" value="ECO:0000353"/>
    <property type="project" value="MTBBASE"/>
</dbReference>
<dbReference type="GO" id="GO:0000976">
    <property type="term" value="F:transcription cis-regulatory region binding"/>
    <property type="evidence" value="ECO:0000318"/>
    <property type="project" value="GO_Central"/>
</dbReference>
<dbReference type="GO" id="GO:0006355">
    <property type="term" value="P:regulation of DNA-templated transcription"/>
    <property type="evidence" value="ECO:0000315"/>
    <property type="project" value="UniProtKB"/>
</dbReference>
<dbReference type="FunFam" id="1.10.357.10:FF:000007">
    <property type="entry name" value="TetR family transcriptional regulator"/>
    <property type="match status" value="1"/>
</dbReference>
<dbReference type="Gene3D" id="1.10.357.10">
    <property type="entry name" value="Tetracycline Repressor, domain 2"/>
    <property type="match status" value="1"/>
</dbReference>
<dbReference type="InterPro" id="IPR009057">
    <property type="entry name" value="Homeodomain-like_sf"/>
</dbReference>
<dbReference type="InterPro" id="IPR050109">
    <property type="entry name" value="HTH-type_TetR-like_transc_reg"/>
</dbReference>
<dbReference type="InterPro" id="IPR001647">
    <property type="entry name" value="HTH_TetR"/>
</dbReference>
<dbReference type="InterPro" id="IPR041642">
    <property type="entry name" value="KstR_C"/>
</dbReference>
<dbReference type="NCBIfam" id="NF033703">
    <property type="entry name" value="transcr_KstR"/>
    <property type="match status" value="1"/>
</dbReference>
<dbReference type="PANTHER" id="PTHR30055">
    <property type="entry name" value="HTH-TYPE TRANSCRIPTIONAL REGULATOR RUTR"/>
    <property type="match status" value="1"/>
</dbReference>
<dbReference type="PANTHER" id="PTHR30055:SF242">
    <property type="entry name" value="HTH-TYPE TRANSCRIPTIONAL REPRESSOR KSTR"/>
    <property type="match status" value="1"/>
</dbReference>
<dbReference type="Pfam" id="PF17925">
    <property type="entry name" value="TetR_C_20"/>
    <property type="match status" value="1"/>
</dbReference>
<dbReference type="Pfam" id="PF00440">
    <property type="entry name" value="TetR_N"/>
    <property type="match status" value="1"/>
</dbReference>
<dbReference type="PRINTS" id="PR00455">
    <property type="entry name" value="HTHTETR"/>
</dbReference>
<dbReference type="SUPFAM" id="SSF46689">
    <property type="entry name" value="Homeodomain-like"/>
    <property type="match status" value="1"/>
</dbReference>
<dbReference type="PROSITE" id="PS50977">
    <property type="entry name" value="HTH_TETR_2"/>
    <property type="match status" value="1"/>
</dbReference>
<evidence type="ECO:0000255" key="1">
    <source>
        <dbReference type="PROSITE-ProRule" id="PRU00335"/>
    </source>
</evidence>
<evidence type="ECO:0000269" key="2">
    <source>
    </source>
</evidence>
<evidence type="ECO:0007829" key="3">
    <source>
        <dbReference type="PDB" id="5AQC"/>
    </source>
</evidence>
<evidence type="ECO:0007829" key="4">
    <source>
        <dbReference type="PDB" id="5FMP"/>
    </source>
</evidence>
<gene>
    <name type="primary">kstR</name>
    <name type="ordered locus">Rv3574</name>
</gene>
<protein>
    <recommendedName>
        <fullName>HTH-type transcriptional repressor KstR</fullName>
    </recommendedName>
</protein>
<accession>P96856</accession>
<accession>L0TEJ7</accession>
<proteinExistence type="evidence at protein level"/>